<protein>
    <recommendedName>
        <fullName evidence="2">Small ribosomal subunit protein bS16</fullName>
    </recommendedName>
    <alternativeName>
        <fullName evidence="3">30S ribosomal protein S16</fullName>
    </alternativeName>
</protein>
<feature type="chain" id="PRO_0000167185" description="Small ribosomal subunit protein bS16">
    <location>
        <begin position="1"/>
        <end position="82"/>
    </location>
</feature>
<accession>P0A7T4</accession>
<accession>P02372</accession>
<accession>P77006</accession>
<sequence length="82" mass="9191">MVTIRLARHGAKKRPFYQVVVADSRNARNGRFIERVGFFNPIASEKEEGTRLDLDRIAHWVGQGATISDRVAALIKEVNKAA</sequence>
<reference key="1">
    <citation type="journal article" date="2002" name="Proc. Natl. Acad. Sci. U.S.A.">
        <title>Extensive mosaic structure revealed by the complete genome sequence of uropathogenic Escherichia coli.</title>
        <authorList>
            <person name="Welch R.A."/>
            <person name="Burland V."/>
            <person name="Plunkett G. III"/>
            <person name="Redford P."/>
            <person name="Roesch P."/>
            <person name="Rasko D."/>
            <person name="Buckles E.L."/>
            <person name="Liou S.-R."/>
            <person name="Boutin A."/>
            <person name="Hackett J."/>
            <person name="Stroud D."/>
            <person name="Mayhew G.F."/>
            <person name="Rose D.J."/>
            <person name="Zhou S."/>
            <person name="Schwartz D.C."/>
            <person name="Perna N.T."/>
            <person name="Mobley H.L.T."/>
            <person name="Donnenberg M.S."/>
            <person name="Blattner F.R."/>
        </authorList>
    </citation>
    <scope>NUCLEOTIDE SEQUENCE [LARGE SCALE GENOMIC DNA]</scope>
    <source>
        <strain>CFT073 / ATCC 700928 / UPEC</strain>
    </source>
</reference>
<keyword id="KW-0255">Endonuclease</keyword>
<keyword id="KW-0378">Hydrolase</keyword>
<keyword id="KW-0540">Nuclease</keyword>
<keyword id="KW-1185">Reference proteome</keyword>
<keyword id="KW-0687">Ribonucleoprotein</keyword>
<keyword id="KW-0689">Ribosomal protein</keyword>
<name>RS16_ECOL6</name>
<comment type="function">
    <text evidence="1">In addition to being a ribosomal protein, S16 also has a cation-dependent endonuclease activity.</text>
</comment>
<comment type="similarity">
    <text evidence="2">Belongs to the bacterial ribosomal protein bS16 family.</text>
</comment>
<comment type="sequence caution" evidence="3">
    <conflict type="erroneous initiation">
        <sequence resource="EMBL-CDS" id="AAN81580"/>
    </conflict>
</comment>
<evidence type="ECO:0000250" key="1"/>
<evidence type="ECO:0000255" key="2">
    <source>
        <dbReference type="HAMAP-Rule" id="MF_00385"/>
    </source>
</evidence>
<evidence type="ECO:0000305" key="3"/>
<gene>
    <name evidence="2" type="primary">rpsP</name>
    <name type="ordered locus">c3130</name>
</gene>
<organism>
    <name type="scientific">Escherichia coli O6:H1 (strain CFT073 / ATCC 700928 / UPEC)</name>
    <dbReference type="NCBI Taxonomy" id="199310"/>
    <lineage>
        <taxon>Bacteria</taxon>
        <taxon>Pseudomonadati</taxon>
        <taxon>Pseudomonadota</taxon>
        <taxon>Gammaproteobacteria</taxon>
        <taxon>Enterobacterales</taxon>
        <taxon>Enterobacteriaceae</taxon>
        <taxon>Escherichia</taxon>
    </lineage>
</organism>
<proteinExistence type="inferred from homology"/>
<dbReference type="EMBL" id="AE014075">
    <property type="protein sequence ID" value="AAN81580.1"/>
    <property type="status" value="ALT_INIT"/>
    <property type="molecule type" value="Genomic_DNA"/>
</dbReference>
<dbReference type="RefSeq" id="WP_000256450.1">
    <property type="nucleotide sequence ID" value="NZ_CP051263.1"/>
</dbReference>
<dbReference type="SMR" id="P0A7T4"/>
<dbReference type="STRING" id="199310.c3130"/>
<dbReference type="GeneID" id="93774459"/>
<dbReference type="KEGG" id="ecc:c3130"/>
<dbReference type="eggNOG" id="COG0228">
    <property type="taxonomic scope" value="Bacteria"/>
</dbReference>
<dbReference type="HOGENOM" id="CLU_100590_5_1_6"/>
<dbReference type="Proteomes" id="UP000001410">
    <property type="component" value="Chromosome"/>
</dbReference>
<dbReference type="GO" id="GO:0005737">
    <property type="term" value="C:cytoplasm"/>
    <property type="evidence" value="ECO:0007669"/>
    <property type="project" value="UniProtKB-ARBA"/>
</dbReference>
<dbReference type="GO" id="GO:0015935">
    <property type="term" value="C:small ribosomal subunit"/>
    <property type="evidence" value="ECO:0007669"/>
    <property type="project" value="TreeGrafter"/>
</dbReference>
<dbReference type="GO" id="GO:0004519">
    <property type="term" value="F:endonuclease activity"/>
    <property type="evidence" value="ECO:0007669"/>
    <property type="project" value="UniProtKB-KW"/>
</dbReference>
<dbReference type="GO" id="GO:0003735">
    <property type="term" value="F:structural constituent of ribosome"/>
    <property type="evidence" value="ECO:0007669"/>
    <property type="project" value="InterPro"/>
</dbReference>
<dbReference type="GO" id="GO:0006412">
    <property type="term" value="P:translation"/>
    <property type="evidence" value="ECO:0007669"/>
    <property type="project" value="UniProtKB-UniRule"/>
</dbReference>
<dbReference type="FunFam" id="3.30.1320.10:FF:000001">
    <property type="entry name" value="30S ribosomal protein S16"/>
    <property type="match status" value="1"/>
</dbReference>
<dbReference type="Gene3D" id="3.30.1320.10">
    <property type="match status" value="1"/>
</dbReference>
<dbReference type="HAMAP" id="MF_00385">
    <property type="entry name" value="Ribosomal_bS16"/>
    <property type="match status" value="1"/>
</dbReference>
<dbReference type="InterPro" id="IPR000307">
    <property type="entry name" value="Ribosomal_bS16"/>
</dbReference>
<dbReference type="InterPro" id="IPR020592">
    <property type="entry name" value="Ribosomal_bS16_CS"/>
</dbReference>
<dbReference type="InterPro" id="IPR023803">
    <property type="entry name" value="Ribosomal_bS16_dom_sf"/>
</dbReference>
<dbReference type="NCBIfam" id="TIGR00002">
    <property type="entry name" value="S16"/>
    <property type="match status" value="1"/>
</dbReference>
<dbReference type="PANTHER" id="PTHR12919">
    <property type="entry name" value="30S RIBOSOMAL PROTEIN S16"/>
    <property type="match status" value="1"/>
</dbReference>
<dbReference type="PANTHER" id="PTHR12919:SF20">
    <property type="entry name" value="SMALL RIBOSOMAL SUBUNIT PROTEIN BS16M"/>
    <property type="match status" value="1"/>
</dbReference>
<dbReference type="Pfam" id="PF00886">
    <property type="entry name" value="Ribosomal_S16"/>
    <property type="match status" value="1"/>
</dbReference>
<dbReference type="SUPFAM" id="SSF54565">
    <property type="entry name" value="Ribosomal protein S16"/>
    <property type="match status" value="1"/>
</dbReference>
<dbReference type="PROSITE" id="PS00732">
    <property type="entry name" value="RIBOSOMAL_S16"/>
    <property type="match status" value="1"/>
</dbReference>